<evidence type="ECO:0000255" key="1">
    <source>
        <dbReference type="HAMAP-Rule" id="MF_00608"/>
    </source>
</evidence>
<comment type="function">
    <text evidence="1">Catalyzes the formation of 2-amino-5-formylamino-6-ribofuranosylamino-4(3H)-pyrimidinone ribonucleotide monophosphate and inorganic phosphate from GTP. Also has an independent pyrophosphate phosphohydrolase activity.</text>
</comment>
<comment type="catalytic activity">
    <reaction evidence="1">
        <text>GTP + 3 H2O = 2-amino-5-formylamino-6-(5-phospho-D-ribosylamino)pyrimidin-4(3H)-one + 2 phosphate + 2 H(+)</text>
        <dbReference type="Rhea" id="RHEA:22468"/>
        <dbReference type="ChEBI" id="CHEBI:15377"/>
        <dbReference type="ChEBI" id="CHEBI:15378"/>
        <dbReference type="ChEBI" id="CHEBI:37565"/>
        <dbReference type="ChEBI" id="CHEBI:43474"/>
        <dbReference type="ChEBI" id="CHEBI:57258"/>
        <dbReference type="EC" id="3.5.4.29"/>
    </reaction>
</comment>
<comment type="similarity">
    <text evidence="1">Belongs to the archaeal-type GTP cyclohydrolase family.</text>
</comment>
<dbReference type="EC" id="3.5.4.29" evidence="1"/>
<dbReference type="EMBL" id="BA000002">
    <property type="protein sequence ID" value="BAA80359.2"/>
    <property type="molecule type" value="Genomic_DNA"/>
</dbReference>
<dbReference type="PIR" id="A72613">
    <property type="entry name" value="A72613"/>
</dbReference>
<dbReference type="RefSeq" id="WP_010866327.1">
    <property type="nucleotide sequence ID" value="NC_000854.2"/>
</dbReference>
<dbReference type="SMR" id="Q9YC89"/>
<dbReference type="STRING" id="272557.APE_1365.1"/>
<dbReference type="EnsemblBacteria" id="BAA80359">
    <property type="protein sequence ID" value="BAA80359"/>
    <property type="gene ID" value="APE_1365.1"/>
</dbReference>
<dbReference type="GeneID" id="1445968"/>
<dbReference type="KEGG" id="ape:APE_1365.1"/>
<dbReference type="eggNOG" id="arCOG04202">
    <property type="taxonomic scope" value="Archaea"/>
</dbReference>
<dbReference type="Proteomes" id="UP000002518">
    <property type="component" value="Chromosome"/>
</dbReference>
<dbReference type="GO" id="GO:0005525">
    <property type="term" value="F:GTP binding"/>
    <property type="evidence" value="ECO:0007669"/>
    <property type="project" value="UniProtKB-KW"/>
</dbReference>
<dbReference type="GO" id="GO:0043740">
    <property type="term" value="F:GTP cyclohydrolase IIa activity"/>
    <property type="evidence" value="ECO:0007669"/>
    <property type="project" value="UniProtKB-EC"/>
</dbReference>
<dbReference type="GO" id="GO:0009058">
    <property type="term" value="P:biosynthetic process"/>
    <property type="evidence" value="ECO:0007669"/>
    <property type="project" value="InterPro"/>
</dbReference>
<dbReference type="Gene3D" id="3.30.70.270">
    <property type="match status" value="1"/>
</dbReference>
<dbReference type="Gene3D" id="3.30.70.1230">
    <property type="entry name" value="Nucleotide cyclase"/>
    <property type="match status" value="1"/>
</dbReference>
<dbReference type="HAMAP" id="MF_00608">
    <property type="entry name" value="GTP_cyclohydro_3"/>
    <property type="match status" value="1"/>
</dbReference>
<dbReference type="InterPro" id="IPR007839">
    <property type="entry name" value="GTP_CycHdrlase_3"/>
</dbReference>
<dbReference type="InterPro" id="IPR029787">
    <property type="entry name" value="Nucleotide_cyclase"/>
</dbReference>
<dbReference type="InterPro" id="IPR043128">
    <property type="entry name" value="Rev_trsase/Diguanyl_cyclase"/>
</dbReference>
<dbReference type="PANTHER" id="PTHR42202">
    <property type="entry name" value="GTP CYCLOHYDROLASE III"/>
    <property type="match status" value="1"/>
</dbReference>
<dbReference type="PANTHER" id="PTHR42202:SF1">
    <property type="entry name" value="GTP CYCLOHYDROLASE III"/>
    <property type="match status" value="1"/>
</dbReference>
<dbReference type="Pfam" id="PF05165">
    <property type="entry name" value="GCH_III"/>
    <property type="match status" value="1"/>
</dbReference>
<dbReference type="PIRSF" id="PIRSF009265">
    <property type="entry name" value="GTP_cyclohydro_3"/>
    <property type="match status" value="1"/>
</dbReference>
<protein>
    <recommendedName>
        <fullName evidence="1">GTP cyclohydrolase III</fullName>
        <ecNumber evidence="1">3.5.4.29</ecNumber>
    </recommendedName>
</protein>
<feature type="chain" id="PRO_0000145751" description="GTP cyclohydrolase III">
    <location>
        <begin position="1"/>
        <end position="241"/>
    </location>
</feature>
<name>GCH3_AERPE</name>
<accession>Q9YC89</accession>
<sequence>MDAKKAVRVAVVEQVGYREWTEELGSDREWIIQTLQSDIYAAAQKEAAGYGGFVLPIRYDIMLLISSNMGVQEHARVLDAIAGLSKVKVRMASYCGVKPLDAVERAWNALRRREERLIYERCEGEEYTAIAHIDLNNVTAITRAEGPVRTYYEVMDLMAKISKVAEKIGAITQYLGGDNILAVLPLNGSVKETVDMLLVRSDLKAGIGIAPTARASLALAAEALHEIRSKINPGPLVVKAQ</sequence>
<reference key="1">
    <citation type="journal article" date="1999" name="DNA Res.">
        <title>Complete genome sequence of an aerobic hyper-thermophilic crenarchaeon, Aeropyrum pernix K1.</title>
        <authorList>
            <person name="Kawarabayasi Y."/>
            <person name="Hino Y."/>
            <person name="Horikawa H."/>
            <person name="Yamazaki S."/>
            <person name="Haikawa Y."/>
            <person name="Jin-no K."/>
            <person name="Takahashi M."/>
            <person name="Sekine M."/>
            <person name="Baba S."/>
            <person name="Ankai A."/>
            <person name="Kosugi H."/>
            <person name="Hosoyama A."/>
            <person name="Fukui S."/>
            <person name="Nagai Y."/>
            <person name="Nishijima K."/>
            <person name="Nakazawa H."/>
            <person name="Takamiya M."/>
            <person name="Masuda S."/>
            <person name="Funahashi T."/>
            <person name="Tanaka T."/>
            <person name="Kudoh Y."/>
            <person name="Yamazaki J."/>
            <person name="Kushida N."/>
            <person name="Oguchi A."/>
            <person name="Aoki K."/>
            <person name="Kubota K."/>
            <person name="Nakamura Y."/>
            <person name="Nomura N."/>
            <person name="Sako Y."/>
            <person name="Kikuchi H."/>
        </authorList>
    </citation>
    <scope>NUCLEOTIDE SEQUENCE [LARGE SCALE GENOMIC DNA]</scope>
    <source>
        <strain>ATCC 700893 / DSM 11879 / JCM 9820 / NBRC 100138 / K1</strain>
    </source>
</reference>
<gene>
    <name evidence="1" type="primary">gch3</name>
    <name type="ordered locus">APE_1365.1</name>
</gene>
<proteinExistence type="inferred from homology"/>
<keyword id="KW-0342">GTP-binding</keyword>
<keyword id="KW-0378">Hydrolase</keyword>
<keyword id="KW-0547">Nucleotide-binding</keyword>
<keyword id="KW-1185">Reference proteome</keyword>
<organism>
    <name type="scientific">Aeropyrum pernix (strain ATCC 700893 / DSM 11879 / JCM 9820 / NBRC 100138 / K1)</name>
    <dbReference type="NCBI Taxonomy" id="272557"/>
    <lineage>
        <taxon>Archaea</taxon>
        <taxon>Thermoproteota</taxon>
        <taxon>Thermoprotei</taxon>
        <taxon>Desulfurococcales</taxon>
        <taxon>Desulfurococcaceae</taxon>
        <taxon>Aeropyrum</taxon>
    </lineage>
</organism>